<feature type="chain" id="PRO_1000193384" description="DNA repair protein RecO">
    <location>
        <begin position="1"/>
        <end position="242"/>
    </location>
</feature>
<dbReference type="EMBL" id="CP001154">
    <property type="protein sequence ID" value="ACO74456.1"/>
    <property type="molecule type" value="Genomic_DNA"/>
</dbReference>
<dbReference type="RefSeq" id="WP_012696942.1">
    <property type="nucleotide sequence ID" value="NC_012559.1"/>
</dbReference>
<dbReference type="SMR" id="C1D7L6"/>
<dbReference type="STRING" id="557598.LHK_01467"/>
<dbReference type="KEGG" id="lhk:LHK_01467"/>
<dbReference type="eggNOG" id="COG1381">
    <property type="taxonomic scope" value="Bacteria"/>
</dbReference>
<dbReference type="HOGENOM" id="CLU_066645_1_0_4"/>
<dbReference type="Proteomes" id="UP000002010">
    <property type="component" value="Chromosome"/>
</dbReference>
<dbReference type="GO" id="GO:0043590">
    <property type="term" value="C:bacterial nucleoid"/>
    <property type="evidence" value="ECO:0007669"/>
    <property type="project" value="TreeGrafter"/>
</dbReference>
<dbReference type="GO" id="GO:0006310">
    <property type="term" value="P:DNA recombination"/>
    <property type="evidence" value="ECO:0007669"/>
    <property type="project" value="UniProtKB-UniRule"/>
</dbReference>
<dbReference type="GO" id="GO:0006302">
    <property type="term" value="P:double-strand break repair"/>
    <property type="evidence" value="ECO:0007669"/>
    <property type="project" value="TreeGrafter"/>
</dbReference>
<dbReference type="Gene3D" id="2.40.50.140">
    <property type="entry name" value="Nucleic acid-binding proteins"/>
    <property type="match status" value="1"/>
</dbReference>
<dbReference type="Gene3D" id="1.20.1440.120">
    <property type="entry name" value="Recombination protein O, C-terminal domain"/>
    <property type="match status" value="1"/>
</dbReference>
<dbReference type="HAMAP" id="MF_00201">
    <property type="entry name" value="RecO"/>
    <property type="match status" value="1"/>
</dbReference>
<dbReference type="InterPro" id="IPR037278">
    <property type="entry name" value="ARFGAP/RecO"/>
</dbReference>
<dbReference type="InterPro" id="IPR022572">
    <property type="entry name" value="DNA_rep/recomb_RecO_N"/>
</dbReference>
<dbReference type="InterPro" id="IPR012340">
    <property type="entry name" value="NA-bd_OB-fold"/>
</dbReference>
<dbReference type="InterPro" id="IPR003717">
    <property type="entry name" value="RecO"/>
</dbReference>
<dbReference type="InterPro" id="IPR042242">
    <property type="entry name" value="RecO_C"/>
</dbReference>
<dbReference type="NCBIfam" id="TIGR00613">
    <property type="entry name" value="reco"/>
    <property type="match status" value="1"/>
</dbReference>
<dbReference type="PANTHER" id="PTHR33991">
    <property type="entry name" value="DNA REPAIR PROTEIN RECO"/>
    <property type="match status" value="1"/>
</dbReference>
<dbReference type="PANTHER" id="PTHR33991:SF1">
    <property type="entry name" value="DNA REPAIR PROTEIN RECO"/>
    <property type="match status" value="1"/>
</dbReference>
<dbReference type="Pfam" id="PF02565">
    <property type="entry name" value="RecO_C"/>
    <property type="match status" value="1"/>
</dbReference>
<dbReference type="Pfam" id="PF11967">
    <property type="entry name" value="RecO_N"/>
    <property type="match status" value="1"/>
</dbReference>
<dbReference type="SUPFAM" id="SSF57863">
    <property type="entry name" value="ArfGap/RecO-like zinc finger"/>
    <property type="match status" value="1"/>
</dbReference>
<dbReference type="SUPFAM" id="SSF50249">
    <property type="entry name" value="Nucleic acid-binding proteins"/>
    <property type="match status" value="1"/>
</dbReference>
<name>RECO_LARHH</name>
<accession>C1D7L6</accession>
<keyword id="KW-0227">DNA damage</keyword>
<keyword id="KW-0233">DNA recombination</keyword>
<keyword id="KW-0234">DNA repair</keyword>
<keyword id="KW-1185">Reference proteome</keyword>
<gene>
    <name evidence="1" type="primary">recO</name>
    <name type="ordered locus">LHK_01467</name>
</gene>
<organism>
    <name type="scientific">Laribacter hongkongensis (strain HLHK9)</name>
    <dbReference type="NCBI Taxonomy" id="557598"/>
    <lineage>
        <taxon>Bacteria</taxon>
        <taxon>Pseudomonadati</taxon>
        <taxon>Pseudomonadota</taxon>
        <taxon>Betaproteobacteria</taxon>
        <taxon>Neisseriales</taxon>
        <taxon>Aquaspirillaceae</taxon>
        <taxon>Laribacter</taxon>
    </lineage>
</organism>
<evidence type="ECO:0000255" key="1">
    <source>
        <dbReference type="HAMAP-Rule" id="MF_00201"/>
    </source>
</evidence>
<sequence length="242" mass="26083">MSQPGKVKGQQAFVLHAQPYKETSLLVEMFTREHGRVGLVARGARRPRAGIRALLLPFSPLEVGWFGKSDIRTLSDIDWQGGLPQLAGTPLVTGFYVNELIMKLVARDDPHEGLFDDYRTLIAHLARGSVAIAPVLRRFELQLLAATGYAPTLDRDLAGEPVRADAVYGFVPGEGARPGAERGCEVSGQTLLALDHGALDQASAAVLREARFLNRALLTHALAGTELASRALLNEVAALSDN</sequence>
<protein>
    <recommendedName>
        <fullName evidence="1">DNA repair protein RecO</fullName>
    </recommendedName>
    <alternativeName>
        <fullName evidence="1">Recombination protein O</fullName>
    </alternativeName>
</protein>
<proteinExistence type="inferred from homology"/>
<reference key="1">
    <citation type="journal article" date="2009" name="PLoS Genet.">
        <title>The complete genome and proteome of Laribacter hongkongensis reveal potential mechanisms for adaptations to different temperatures and habitats.</title>
        <authorList>
            <person name="Woo P.C.Y."/>
            <person name="Lau S.K.P."/>
            <person name="Tse H."/>
            <person name="Teng J.L.L."/>
            <person name="Curreem S.O."/>
            <person name="Tsang A.K.L."/>
            <person name="Fan R.Y.Y."/>
            <person name="Wong G.K.M."/>
            <person name="Huang Y."/>
            <person name="Loman N.J."/>
            <person name="Snyder L.A.S."/>
            <person name="Cai J.J."/>
            <person name="Huang J.-D."/>
            <person name="Mak W."/>
            <person name="Pallen M.J."/>
            <person name="Lok S."/>
            <person name="Yuen K.-Y."/>
        </authorList>
    </citation>
    <scope>NUCLEOTIDE SEQUENCE [LARGE SCALE GENOMIC DNA]</scope>
    <source>
        <strain>HLHK9</strain>
    </source>
</reference>
<comment type="function">
    <text evidence="1">Involved in DNA repair and RecF pathway recombination.</text>
</comment>
<comment type="similarity">
    <text evidence="1">Belongs to the RecO family.</text>
</comment>